<feature type="chain" id="PRO_0000225442" description="Protein-glutamate methylesterase/protein-glutamine glutaminase">
    <location>
        <begin position="1"/>
        <end position="357"/>
    </location>
</feature>
<feature type="domain" description="Response regulatory" evidence="1">
    <location>
        <begin position="3"/>
        <end position="120"/>
    </location>
</feature>
<feature type="domain" description="CheB-type methylesterase" evidence="1">
    <location>
        <begin position="161"/>
        <end position="355"/>
    </location>
</feature>
<feature type="active site" evidence="1">
    <location>
        <position position="173"/>
    </location>
</feature>
<feature type="active site" evidence="1">
    <location>
        <position position="200"/>
    </location>
</feature>
<feature type="active site" evidence="1">
    <location>
        <position position="296"/>
    </location>
</feature>
<feature type="modified residue" description="4-aspartylphosphate" evidence="1">
    <location>
        <position position="54"/>
    </location>
</feature>
<evidence type="ECO:0000255" key="1">
    <source>
        <dbReference type="HAMAP-Rule" id="MF_00099"/>
    </source>
</evidence>
<organism>
    <name type="scientific">Bacillus licheniformis (strain ATCC 14580 / DSM 13 / JCM 2505 / CCUG 7422 / NBRC 12200 / NCIMB 9375 / NCTC 10341 / NRRL NRS-1264 / Gibson 46)</name>
    <dbReference type="NCBI Taxonomy" id="279010"/>
    <lineage>
        <taxon>Bacteria</taxon>
        <taxon>Bacillati</taxon>
        <taxon>Bacillota</taxon>
        <taxon>Bacilli</taxon>
        <taxon>Bacillales</taxon>
        <taxon>Bacillaceae</taxon>
        <taxon>Bacillus</taxon>
    </lineage>
</organism>
<name>CHEB_BACLD</name>
<accession>Q65JK6</accession>
<accession>Q62V11</accession>
<gene>
    <name evidence="1" type="primary">cheB</name>
    <name type="ordered locus">BLi01863</name>
    <name type="ordered locus">BL01251</name>
</gene>
<comment type="function">
    <text evidence="1">Involved in chemotaxis. Part of a chemotaxis signal transduction system that modulates chemotaxis in response to various stimuli. Catalyzes the demethylation of specific methylglutamate residues introduced into the chemoreceptors (methyl-accepting chemotaxis proteins or MCP) by CheR. Also mediates the irreversible deamidation of specific glutamine residues to glutamic acid.</text>
</comment>
<comment type="catalytic activity">
    <reaction evidence="1">
        <text>[protein]-L-glutamate 5-O-methyl ester + H2O = L-glutamyl-[protein] + methanol + H(+)</text>
        <dbReference type="Rhea" id="RHEA:23236"/>
        <dbReference type="Rhea" id="RHEA-COMP:10208"/>
        <dbReference type="Rhea" id="RHEA-COMP:10311"/>
        <dbReference type="ChEBI" id="CHEBI:15377"/>
        <dbReference type="ChEBI" id="CHEBI:15378"/>
        <dbReference type="ChEBI" id="CHEBI:17790"/>
        <dbReference type="ChEBI" id="CHEBI:29973"/>
        <dbReference type="ChEBI" id="CHEBI:82795"/>
        <dbReference type="EC" id="3.1.1.61"/>
    </reaction>
</comment>
<comment type="catalytic activity">
    <reaction evidence="1">
        <text>L-glutaminyl-[protein] + H2O = L-glutamyl-[protein] + NH4(+)</text>
        <dbReference type="Rhea" id="RHEA:16441"/>
        <dbReference type="Rhea" id="RHEA-COMP:10207"/>
        <dbReference type="Rhea" id="RHEA-COMP:10208"/>
        <dbReference type="ChEBI" id="CHEBI:15377"/>
        <dbReference type="ChEBI" id="CHEBI:28938"/>
        <dbReference type="ChEBI" id="CHEBI:29973"/>
        <dbReference type="ChEBI" id="CHEBI:30011"/>
        <dbReference type="EC" id="3.5.1.44"/>
    </reaction>
</comment>
<comment type="subcellular location">
    <subcellularLocation>
        <location evidence="1">Cytoplasm</location>
    </subcellularLocation>
</comment>
<comment type="domain">
    <text evidence="1">Contains a C-terminal catalytic domain, and an N-terminal region which modulates catalytic activity.</text>
</comment>
<comment type="PTM">
    <text evidence="1">Phosphorylated by CheA. Phosphorylation of the N-terminal regulatory domain activates the methylesterase activity.</text>
</comment>
<comment type="similarity">
    <text evidence="1">Belongs to the CheB family.</text>
</comment>
<keyword id="KW-0145">Chemotaxis</keyword>
<keyword id="KW-0963">Cytoplasm</keyword>
<keyword id="KW-0378">Hydrolase</keyword>
<keyword id="KW-0597">Phosphoprotein</keyword>
<keyword id="KW-1185">Reference proteome</keyword>
<dbReference type="EC" id="3.1.1.61" evidence="1"/>
<dbReference type="EC" id="3.5.1.44" evidence="1"/>
<dbReference type="EMBL" id="AE017333">
    <property type="protein sequence ID" value="AAU40758.1"/>
    <property type="molecule type" value="Genomic_DNA"/>
</dbReference>
<dbReference type="EMBL" id="CP000002">
    <property type="protein sequence ID" value="AAU23398.1"/>
    <property type="molecule type" value="Genomic_DNA"/>
</dbReference>
<dbReference type="RefSeq" id="WP_003181813.1">
    <property type="nucleotide sequence ID" value="NC_006322.1"/>
</dbReference>
<dbReference type="SMR" id="Q65JK6"/>
<dbReference type="STRING" id="279010.BL01251"/>
<dbReference type="KEGG" id="bld:BLi01863"/>
<dbReference type="KEGG" id="bli:BL01251"/>
<dbReference type="eggNOG" id="COG2201">
    <property type="taxonomic scope" value="Bacteria"/>
</dbReference>
<dbReference type="HOGENOM" id="CLU_000445_51_0_9"/>
<dbReference type="Proteomes" id="UP000000606">
    <property type="component" value="Chromosome"/>
</dbReference>
<dbReference type="GO" id="GO:0005737">
    <property type="term" value="C:cytoplasm"/>
    <property type="evidence" value="ECO:0007669"/>
    <property type="project" value="UniProtKB-SubCell"/>
</dbReference>
<dbReference type="GO" id="GO:0000156">
    <property type="term" value="F:phosphorelay response regulator activity"/>
    <property type="evidence" value="ECO:0007669"/>
    <property type="project" value="InterPro"/>
</dbReference>
<dbReference type="GO" id="GO:0008984">
    <property type="term" value="F:protein-glutamate methylesterase activity"/>
    <property type="evidence" value="ECO:0007669"/>
    <property type="project" value="UniProtKB-UniRule"/>
</dbReference>
<dbReference type="GO" id="GO:0050568">
    <property type="term" value="F:protein-glutamine glutaminase activity"/>
    <property type="evidence" value="ECO:0007669"/>
    <property type="project" value="UniProtKB-UniRule"/>
</dbReference>
<dbReference type="GO" id="GO:0006935">
    <property type="term" value="P:chemotaxis"/>
    <property type="evidence" value="ECO:0007669"/>
    <property type="project" value="UniProtKB-UniRule"/>
</dbReference>
<dbReference type="CDD" id="cd16432">
    <property type="entry name" value="CheB_Rec"/>
    <property type="match status" value="1"/>
</dbReference>
<dbReference type="CDD" id="cd17541">
    <property type="entry name" value="REC_CheB-like"/>
    <property type="match status" value="1"/>
</dbReference>
<dbReference type="Gene3D" id="3.40.50.2300">
    <property type="match status" value="1"/>
</dbReference>
<dbReference type="Gene3D" id="3.40.50.180">
    <property type="entry name" value="Methylesterase CheB, C-terminal domain"/>
    <property type="match status" value="1"/>
</dbReference>
<dbReference type="HAMAP" id="MF_00099">
    <property type="entry name" value="CheB_chemtxs"/>
    <property type="match status" value="1"/>
</dbReference>
<dbReference type="InterPro" id="IPR008248">
    <property type="entry name" value="CheB-like"/>
</dbReference>
<dbReference type="InterPro" id="IPR035909">
    <property type="entry name" value="CheB_C"/>
</dbReference>
<dbReference type="InterPro" id="IPR011006">
    <property type="entry name" value="CheY-like_superfamily"/>
</dbReference>
<dbReference type="InterPro" id="IPR000673">
    <property type="entry name" value="Sig_transdc_resp-reg_Me-estase"/>
</dbReference>
<dbReference type="InterPro" id="IPR001789">
    <property type="entry name" value="Sig_transdc_resp-reg_receiver"/>
</dbReference>
<dbReference type="NCBIfam" id="NF001965">
    <property type="entry name" value="PRK00742.1"/>
    <property type="match status" value="1"/>
</dbReference>
<dbReference type="PANTHER" id="PTHR42872">
    <property type="entry name" value="PROTEIN-GLUTAMATE METHYLESTERASE/PROTEIN-GLUTAMINE GLUTAMINASE"/>
    <property type="match status" value="1"/>
</dbReference>
<dbReference type="PANTHER" id="PTHR42872:SF3">
    <property type="entry name" value="PROTEIN-GLUTAMATE METHYLESTERASE_PROTEIN-GLUTAMINE GLUTAMINASE 1"/>
    <property type="match status" value="1"/>
</dbReference>
<dbReference type="Pfam" id="PF01339">
    <property type="entry name" value="CheB_methylest"/>
    <property type="match status" value="1"/>
</dbReference>
<dbReference type="Pfam" id="PF00072">
    <property type="entry name" value="Response_reg"/>
    <property type="match status" value="1"/>
</dbReference>
<dbReference type="PIRSF" id="PIRSF000876">
    <property type="entry name" value="RR_chemtxs_CheB"/>
    <property type="match status" value="1"/>
</dbReference>
<dbReference type="SMART" id="SM00448">
    <property type="entry name" value="REC"/>
    <property type="match status" value="1"/>
</dbReference>
<dbReference type="SUPFAM" id="SSF52172">
    <property type="entry name" value="CheY-like"/>
    <property type="match status" value="1"/>
</dbReference>
<dbReference type="SUPFAM" id="SSF52738">
    <property type="entry name" value="Methylesterase CheB, C-terminal domain"/>
    <property type="match status" value="1"/>
</dbReference>
<dbReference type="PROSITE" id="PS50122">
    <property type="entry name" value="CHEB"/>
    <property type="match status" value="1"/>
</dbReference>
<dbReference type="PROSITE" id="PS50110">
    <property type="entry name" value="RESPONSE_REGULATORY"/>
    <property type="match status" value="1"/>
</dbReference>
<protein>
    <recommendedName>
        <fullName evidence="1">Protein-glutamate methylesterase/protein-glutamine glutaminase</fullName>
        <ecNumber evidence="1">3.1.1.61</ecNumber>
        <ecNumber evidence="1">3.5.1.44</ecNumber>
    </recommendedName>
</protein>
<reference key="1">
    <citation type="journal article" date="2004" name="J. Mol. Microbiol. Biotechnol.">
        <title>The complete genome sequence of Bacillus licheniformis DSM13, an organism with great industrial potential.</title>
        <authorList>
            <person name="Veith B."/>
            <person name="Herzberg C."/>
            <person name="Steckel S."/>
            <person name="Feesche J."/>
            <person name="Maurer K.H."/>
            <person name="Ehrenreich P."/>
            <person name="Baeumer S."/>
            <person name="Henne A."/>
            <person name="Liesegang H."/>
            <person name="Merkl R."/>
            <person name="Ehrenreich A."/>
            <person name="Gottschalk G."/>
        </authorList>
    </citation>
    <scope>NUCLEOTIDE SEQUENCE [LARGE SCALE GENOMIC DNA]</scope>
    <source>
        <strain>ATCC 14580 / DSM 13 / JCM 2505 / CCUG 7422 / NBRC 12200 / NCIMB 9375 / NCTC 10341 / NRRL NRS-1264 / Gibson 46</strain>
    </source>
</reference>
<reference key="2">
    <citation type="journal article" date="2004" name="Genome Biol.">
        <title>Complete genome sequence of the industrial bacterium Bacillus licheniformis and comparisons with closely related Bacillus species.</title>
        <authorList>
            <person name="Rey M.W."/>
            <person name="Ramaiya P."/>
            <person name="Nelson B.A."/>
            <person name="Brody-Karpin S.D."/>
            <person name="Zaretsky E.J."/>
            <person name="Tang M."/>
            <person name="Lopez de Leon A."/>
            <person name="Xiang H."/>
            <person name="Gusti V."/>
            <person name="Clausen I.G."/>
            <person name="Olsen P.B."/>
            <person name="Rasmussen M.D."/>
            <person name="Andersen J.T."/>
            <person name="Joergensen P.L."/>
            <person name="Larsen T.S."/>
            <person name="Sorokin A."/>
            <person name="Bolotin A."/>
            <person name="Lapidus A."/>
            <person name="Galleron N."/>
            <person name="Ehrlich S.D."/>
            <person name="Berka R.M."/>
        </authorList>
    </citation>
    <scope>NUCLEOTIDE SEQUENCE [LARGE SCALE GENOMIC DNA]</scope>
    <source>
        <strain>ATCC 14580 / DSM 13 / JCM 2505 / CCUG 7422 / NBRC 12200 / NCIMB 9375 / NCTC 10341 / NRRL NRS-1264 / Gibson 46</strain>
    </source>
</reference>
<proteinExistence type="inferred from homology"/>
<sequence>MIRVLVVDDSAFMRNMITKFLTSNHEIAVAGTARNGEEALQKIKELRPDVITLDIEMPVMNGKETLKRIMASDPLPVVMVSSLTQQGADITIECLELGAIDFVAKPSGSISIDLYKVRDMLIEKVLTAGRVKLKGRQVPISKPAIETAKQPIVGGSDSVRFRAGKQLICIGTSTGGPRALQRVLPKLPKTLKAPVFIVQHMPKGFTASLANRLNHLSEVTVKEAENGERAKDGWVYIAPGGKNMAVGLEKGELVITLDDRDTESRHKPSVDYLFQSLASLREFEKIAVIMTGMGSDGTEGVKGLLKHGSGTVIAEAAESSVVFGMPKSVINNGLANDIKHVDEIAAAIMTYMKKERA</sequence>